<organism>
    <name type="scientific">Saccharomyces cerevisiae (strain ATCC 204508 / S288c)</name>
    <name type="common">Baker's yeast</name>
    <dbReference type="NCBI Taxonomy" id="559292"/>
    <lineage>
        <taxon>Eukaryota</taxon>
        <taxon>Fungi</taxon>
        <taxon>Dikarya</taxon>
        <taxon>Ascomycota</taxon>
        <taxon>Saccharomycotina</taxon>
        <taxon>Saccharomycetes</taxon>
        <taxon>Saccharomycetales</taxon>
        <taxon>Saccharomycetaceae</taxon>
        <taxon>Saccharomyces</taxon>
    </lineage>
</organism>
<keyword id="KW-0002">3D-structure</keyword>
<keyword id="KW-0378">Hydrolase</keyword>
<keyword id="KW-0539">Nucleus</keyword>
<keyword id="KW-1185">Reference proteome</keyword>
<keyword id="KW-0698">rRNA processing</keyword>
<keyword id="KW-0819">tRNA processing</keyword>
<name>RPP1_YEAST</name>
<protein>
    <recommendedName>
        <fullName>Ribonuclease P/MRP protein subunit RPP1</fullName>
        <ecNumber>3.1.26.5</ecNumber>
    </recommendedName>
    <alternativeName>
        <fullName>RNA-processing protein RPP1</fullName>
    </alternativeName>
    <alternativeName>
        <fullName>RNaseP/MRP 32.2 kDa subunit</fullName>
    </alternativeName>
</protein>
<gene>
    <name type="primary">RPP1</name>
    <name type="ordered locus">YHR062C</name>
</gene>
<feature type="chain" id="PRO_0000140034" description="Ribonuclease P/MRP protein subunit RPP1">
    <location>
        <begin position="1"/>
        <end position="293"/>
    </location>
</feature>
<feature type="strand" evidence="9">
    <location>
        <begin position="3"/>
        <end position="8"/>
    </location>
</feature>
<feature type="strand" evidence="9">
    <location>
        <begin position="13"/>
        <end position="15"/>
    </location>
</feature>
<feature type="helix" evidence="9">
    <location>
        <begin position="20"/>
        <end position="36"/>
    </location>
</feature>
<feature type="strand" evidence="9">
    <location>
        <begin position="39"/>
        <end position="48"/>
    </location>
</feature>
<feature type="strand" evidence="8">
    <location>
        <begin position="49"/>
        <end position="51"/>
    </location>
</feature>
<feature type="strand" evidence="10">
    <location>
        <begin position="57"/>
        <end position="60"/>
    </location>
</feature>
<feature type="helix" evidence="9">
    <location>
        <begin position="65"/>
        <end position="68"/>
    </location>
</feature>
<feature type="helix" evidence="9">
    <location>
        <begin position="70"/>
        <end position="76"/>
    </location>
</feature>
<feature type="strand" evidence="9">
    <location>
        <begin position="79"/>
        <end position="88"/>
    </location>
</feature>
<feature type="strand" evidence="7">
    <location>
        <begin position="90"/>
        <end position="93"/>
    </location>
</feature>
<feature type="helix" evidence="9">
    <location>
        <begin position="100"/>
        <end position="103"/>
    </location>
</feature>
<feature type="strand" evidence="9">
    <location>
        <begin position="104"/>
        <end position="111"/>
    </location>
</feature>
<feature type="helix" evidence="9">
    <location>
        <begin position="114"/>
        <end position="122"/>
    </location>
</feature>
<feature type="strand" evidence="9">
    <location>
        <begin position="127"/>
        <end position="130"/>
    </location>
</feature>
<feature type="strand" evidence="9">
    <location>
        <begin position="133"/>
        <end position="135"/>
    </location>
</feature>
<feature type="helix" evidence="9">
    <location>
        <begin position="143"/>
        <end position="152"/>
    </location>
</feature>
<feature type="strand" evidence="9">
    <location>
        <begin position="155"/>
        <end position="161"/>
    </location>
</feature>
<feature type="helix" evidence="9">
    <location>
        <begin position="162"/>
        <end position="164"/>
    </location>
</feature>
<feature type="helix" evidence="9">
    <location>
        <begin position="169"/>
        <end position="184"/>
    </location>
</feature>
<feature type="strand" evidence="9">
    <location>
        <begin position="186"/>
        <end position="192"/>
    </location>
</feature>
<feature type="helix" evidence="10">
    <location>
        <begin position="198"/>
        <end position="200"/>
    </location>
</feature>
<feature type="helix" evidence="9">
    <location>
        <begin position="204"/>
        <end position="214"/>
    </location>
</feature>
<feature type="helix" evidence="9">
    <location>
        <begin position="218"/>
        <end position="241"/>
    </location>
</feature>
<feature type="strand" evidence="9">
    <location>
        <begin position="243"/>
        <end position="249"/>
    </location>
</feature>
<feature type="strand" evidence="9">
    <location>
        <begin position="253"/>
        <end position="256"/>
    </location>
</feature>
<feature type="turn" evidence="9">
    <location>
        <begin position="259"/>
        <end position="261"/>
    </location>
</feature>
<feature type="strand" evidence="9">
    <location>
        <begin position="264"/>
        <end position="266"/>
    </location>
</feature>
<feature type="strand" evidence="9">
    <location>
        <begin position="268"/>
        <end position="270"/>
    </location>
</feature>
<feature type="strand" evidence="8">
    <location>
        <begin position="274"/>
        <end position="276"/>
    </location>
</feature>
<feature type="strand" evidence="9">
    <location>
        <begin position="281"/>
        <end position="283"/>
    </location>
</feature>
<feature type="turn" evidence="9">
    <location>
        <begin position="287"/>
        <end position="289"/>
    </location>
</feature>
<dbReference type="EC" id="3.1.26.5"/>
<dbReference type="EMBL" id="U95757">
    <property type="protein sequence ID" value="AAB96559.1"/>
    <property type="molecule type" value="Genomic_DNA"/>
</dbReference>
<dbReference type="EMBL" id="U00061">
    <property type="protein sequence ID" value="AAB68389.1"/>
    <property type="molecule type" value="Genomic_DNA"/>
</dbReference>
<dbReference type="EMBL" id="BK006934">
    <property type="protein sequence ID" value="DAA06755.1"/>
    <property type="molecule type" value="Genomic_DNA"/>
</dbReference>
<dbReference type="PIR" id="S46710">
    <property type="entry name" value="S46710"/>
</dbReference>
<dbReference type="RefSeq" id="NP_011929.1">
    <property type="nucleotide sequence ID" value="NM_001179192.1"/>
</dbReference>
<dbReference type="PDB" id="6AGB">
    <property type="method" value="EM"/>
    <property type="resolution" value="3.48 A"/>
    <property type="chains" value="I/J=1-293"/>
</dbReference>
<dbReference type="PDB" id="6AH3">
    <property type="method" value="EM"/>
    <property type="resolution" value="3.48 A"/>
    <property type="chains" value="I/J=1-293"/>
</dbReference>
<dbReference type="PDB" id="6W6V">
    <property type="method" value="EM"/>
    <property type="resolution" value="3.00 A"/>
    <property type="chains" value="I/J=1-293"/>
</dbReference>
<dbReference type="PDB" id="7C79">
    <property type="method" value="EM"/>
    <property type="resolution" value="2.50 A"/>
    <property type="chains" value="I/J=1-293"/>
</dbReference>
<dbReference type="PDB" id="7C7A">
    <property type="method" value="EM"/>
    <property type="resolution" value="2.80 A"/>
    <property type="chains" value="I/J=1-293"/>
</dbReference>
<dbReference type="PDBsum" id="6AGB"/>
<dbReference type="PDBsum" id="6AH3"/>
<dbReference type="PDBsum" id="6W6V"/>
<dbReference type="PDBsum" id="7C79"/>
<dbReference type="PDBsum" id="7C7A"/>
<dbReference type="EMDB" id="EMD-21564"/>
<dbReference type="EMDB" id="EMD-30296"/>
<dbReference type="EMDB" id="EMD-30297"/>
<dbReference type="EMDB" id="EMD-9616"/>
<dbReference type="EMDB" id="EMD-9622"/>
<dbReference type="SMR" id="P38786"/>
<dbReference type="BioGRID" id="36494">
    <property type="interactions" value="237"/>
</dbReference>
<dbReference type="ComplexPortal" id="CPX-1873">
    <property type="entry name" value="Nucleolar ribonuclease P complex"/>
</dbReference>
<dbReference type="ComplexPortal" id="CPX-3284">
    <property type="entry name" value="Nucleolar ribonuclease MRP complex"/>
</dbReference>
<dbReference type="DIP" id="DIP-5590N"/>
<dbReference type="FunCoup" id="P38786">
    <property type="interactions" value="748"/>
</dbReference>
<dbReference type="IntAct" id="P38786">
    <property type="interactions" value="13"/>
</dbReference>
<dbReference type="MINT" id="P38786"/>
<dbReference type="STRING" id="4932.YHR062C"/>
<dbReference type="iPTMnet" id="P38786"/>
<dbReference type="PaxDb" id="4932-YHR062C"/>
<dbReference type="PeptideAtlas" id="P38786"/>
<dbReference type="TopDownProteomics" id="P38786"/>
<dbReference type="EnsemblFungi" id="YHR062C_mRNA">
    <property type="protein sequence ID" value="YHR062C"/>
    <property type="gene ID" value="YHR062C"/>
</dbReference>
<dbReference type="GeneID" id="856459"/>
<dbReference type="KEGG" id="sce:YHR062C"/>
<dbReference type="AGR" id="SGD:S000001104"/>
<dbReference type="SGD" id="S000001104">
    <property type="gene designation" value="RPP1"/>
</dbReference>
<dbReference type="VEuPathDB" id="FungiDB:YHR062C"/>
<dbReference type="eggNOG" id="KOG2363">
    <property type="taxonomic scope" value="Eukaryota"/>
</dbReference>
<dbReference type="GeneTree" id="ENSGT00390000000883"/>
<dbReference type="HOGENOM" id="CLU_048451_3_0_1"/>
<dbReference type="InParanoid" id="P38786"/>
<dbReference type="OMA" id="CYGPGIT"/>
<dbReference type="OrthoDB" id="17948at2759"/>
<dbReference type="BioCyc" id="YEAST:YHR062C-MONOMER"/>
<dbReference type="BioGRID-ORCS" id="856459">
    <property type="hits" value="1 hit in 10 CRISPR screens"/>
</dbReference>
<dbReference type="CD-CODE" id="7CAF9006">
    <property type="entry name" value="Tam body"/>
</dbReference>
<dbReference type="CD-CODE" id="BDAE0F88">
    <property type="entry name" value="Nucleolus"/>
</dbReference>
<dbReference type="PRO" id="PR:P38786"/>
<dbReference type="Proteomes" id="UP000002311">
    <property type="component" value="Chromosome VIII"/>
</dbReference>
<dbReference type="RNAct" id="P38786">
    <property type="molecule type" value="protein"/>
</dbReference>
<dbReference type="GO" id="GO:0005829">
    <property type="term" value="C:cytosol"/>
    <property type="evidence" value="ECO:0000314"/>
    <property type="project" value="SGD"/>
</dbReference>
<dbReference type="GO" id="GO:0005655">
    <property type="term" value="C:nucleolar ribonuclease P complex"/>
    <property type="evidence" value="ECO:0000314"/>
    <property type="project" value="SGD"/>
</dbReference>
<dbReference type="GO" id="GO:0005634">
    <property type="term" value="C:nucleus"/>
    <property type="evidence" value="ECO:0000314"/>
    <property type="project" value="SGD"/>
</dbReference>
<dbReference type="GO" id="GO:0000172">
    <property type="term" value="C:ribonuclease MRP complex"/>
    <property type="evidence" value="ECO:0000314"/>
    <property type="project" value="SGD"/>
</dbReference>
<dbReference type="GO" id="GO:0004526">
    <property type="term" value="F:ribonuclease P activity"/>
    <property type="evidence" value="ECO:0007669"/>
    <property type="project" value="UniProtKB-EC"/>
</dbReference>
<dbReference type="GO" id="GO:0003723">
    <property type="term" value="F:RNA binding"/>
    <property type="evidence" value="ECO:0000314"/>
    <property type="project" value="SGD"/>
</dbReference>
<dbReference type="GO" id="GO:0034965">
    <property type="term" value="P:intronic box C/D snoRNA processing"/>
    <property type="evidence" value="ECO:0000314"/>
    <property type="project" value="SGD"/>
</dbReference>
<dbReference type="GO" id="GO:0000460">
    <property type="term" value="P:maturation of 5.8S rRNA"/>
    <property type="evidence" value="ECO:0000314"/>
    <property type="project" value="ComplexPortal"/>
</dbReference>
<dbReference type="GO" id="GO:0000294">
    <property type="term" value="P:nuclear-transcribed mRNA catabolic process, RNase MRP-dependent"/>
    <property type="evidence" value="ECO:0000314"/>
    <property type="project" value="SGD"/>
</dbReference>
<dbReference type="GO" id="GO:0006364">
    <property type="term" value="P:rRNA processing"/>
    <property type="evidence" value="ECO:0000315"/>
    <property type="project" value="SGD"/>
</dbReference>
<dbReference type="GO" id="GO:0001682">
    <property type="term" value="P:tRNA 5'-leader removal"/>
    <property type="evidence" value="ECO:0000314"/>
    <property type="project" value="ComplexPortal"/>
</dbReference>
<dbReference type="GO" id="GO:0008033">
    <property type="term" value="P:tRNA processing"/>
    <property type="evidence" value="ECO:0000315"/>
    <property type="project" value="SGD"/>
</dbReference>
<dbReference type="FunFam" id="3.20.20.140:FF:000081">
    <property type="entry name" value="RNase MRP subunit"/>
    <property type="match status" value="1"/>
</dbReference>
<dbReference type="Gene3D" id="3.20.20.140">
    <property type="entry name" value="Metal-dependent hydrolases"/>
    <property type="match status" value="1"/>
</dbReference>
<dbReference type="InterPro" id="IPR016195">
    <property type="entry name" value="Pol/histidinol_Pase-like"/>
</dbReference>
<dbReference type="InterPro" id="IPR002738">
    <property type="entry name" value="RNase_P_p30"/>
</dbReference>
<dbReference type="PANTHER" id="PTHR13031:SF0">
    <property type="entry name" value="RIBONUCLEASE P PROTEIN SUBUNIT P30"/>
    <property type="match status" value="1"/>
</dbReference>
<dbReference type="PANTHER" id="PTHR13031">
    <property type="entry name" value="RIBONUCLEASE P SUBUNIT P30"/>
    <property type="match status" value="1"/>
</dbReference>
<dbReference type="Pfam" id="PF01876">
    <property type="entry name" value="RNase_P_p30"/>
    <property type="match status" value="1"/>
</dbReference>
<dbReference type="SUPFAM" id="SSF89550">
    <property type="entry name" value="PHP domain-like"/>
    <property type="match status" value="1"/>
</dbReference>
<accession>P38786</accession>
<accession>D3DL11</accession>
<proteinExistence type="evidence at protein level"/>
<reference key="1">
    <citation type="journal article" date="1997" name="Genes Dev.">
        <title>Rpp1, an essential protein subunit of nuclear RNase P required for processing of precursor tRNA and 35S precursor rRNA in Saccharomyces cerevisiae.</title>
        <authorList>
            <person name="Stolc V."/>
            <person name="Altman S."/>
        </authorList>
    </citation>
    <scope>NUCLEOTIDE SEQUENCE [GENOMIC DNA]</scope>
    <scope>FUNCTION</scope>
    <scope>SUBUNIT</scope>
</reference>
<reference key="2">
    <citation type="journal article" date="1997" name="Genes Dev.">
        <authorList>
            <person name="Stolc V."/>
            <person name="Altman S."/>
        </authorList>
    </citation>
    <scope>ERRATUM OF PUBMED:9308968</scope>
</reference>
<reference key="3">
    <citation type="journal article" date="1994" name="Science">
        <title>Complete nucleotide sequence of Saccharomyces cerevisiae chromosome VIII.</title>
        <authorList>
            <person name="Johnston M."/>
            <person name="Andrews S."/>
            <person name="Brinkman R."/>
            <person name="Cooper J."/>
            <person name="Ding H."/>
            <person name="Dover J."/>
            <person name="Du Z."/>
            <person name="Favello A."/>
            <person name="Fulton L."/>
            <person name="Gattung S."/>
            <person name="Geisel C."/>
            <person name="Kirsten J."/>
            <person name="Kucaba T."/>
            <person name="Hillier L.W."/>
            <person name="Jier M."/>
            <person name="Johnston L."/>
            <person name="Langston Y."/>
            <person name="Latreille P."/>
            <person name="Louis E.J."/>
            <person name="Macri C."/>
            <person name="Mardis E."/>
            <person name="Menezes S."/>
            <person name="Mouser L."/>
            <person name="Nhan M."/>
            <person name="Rifkin L."/>
            <person name="Riles L."/>
            <person name="St Peter H."/>
            <person name="Trevaskis E."/>
            <person name="Vaughan K."/>
            <person name="Vignati D."/>
            <person name="Wilcox L."/>
            <person name="Wohldman P."/>
            <person name="Waterston R."/>
            <person name="Wilson R."/>
            <person name="Vaudin M."/>
        </authorList>
    </citation>
    <scope>NUCLEOTIDE SEQUENCE [LARGE SCALE GENOMIC DNA]</scope>
    <source>
        <strain>ATCC 204508 / S288c</strain>
    </source>
</reference>
<reference key="4">
    <citation type="journal article" date="2014" name="G3 (Bethesda)">
        <title>The reference genome sequence of Saccharomyces cerevisiae: Then and now.</title>
        <authorList>
            <person name="Engel S.R."/>
            <person name="Dietrich F.S."/>
            <person name="Fisk D.G."/>
            <person name="Binkley G."/>
            <person name="Balakrishnan R."/>
            <person name="Costanzo M.C."/>
            <person name="Dwight S.S."/>
            <person name="Hitz B.C."/>
            <person name="Karra K."/>
            <person name="Nash R.S."/>
            <person name="Weng S."/>
            <person name="Wong E.D."/>
            <person name="Lloyd P."/>
            <person name="Skrzypek M.S."/>
            <person name="Miyasato S.R."/>
            <person name="Simison M."/>
            <person name="Cherry J.M."/>
        </authorList>
    </citation>
    <scope>GENOME REANNOTATION</scope>
    <source>
        <strain>ATCC 204508 / S288c</strain>
    </source>
</reference>
<reference key="5">
    <citation type="journal article" date="1998" name="Genes Dev.">
        <title>Purification and characterization of the nuclear RNase P holoenzyme complex reveals extensive subunit overlap with RNase MRP.</title>
        <authorList>
            <person name="Chamberlain J.R."/>
            <person name="Lee Y."/>
            <person name="Lane W.S."/>
            <person name="Engelke D.R."/>
        </authorList>
    </citation>
    <scope>FUNCTION</scope>
    <scope>IDENTIFICATION IN THE RNASE P COMPLEX BY MASS SPECTROMETRY</scope>
</reference>
<reference key="6">
    <citation type="journal article" date="2003" name="Mol. Cell">
        <title>Assigning function to yeast proteins by integration of technologies.</title>
        <authorList>
            <person name="Hazbun T.R."/>
            <person name="Malmstroem L."/>
            <person name="Anderson S."/>
            <person name="Graczyk B.J."/>
            <person name="Fox B."/>
            <person name="Riffle M."/>
            <person name="Sundin B.A."/>
            <person name="Aranda J.D."/>
            <person name="McDonald W.H."/>
            <person name="Chiu C.-H."/>
            <person name="Snydsman B.E."/>
            <person name="Bradley P."/>
            <person name="Muller E.G.D."/>
            <person name="Fields S."/>
            <person name="Baker D."/>
            <person name="Yates J.R. III"/>
            <person name="Davis T.N."/>
        </authorList>
    </citation>
    <scope>IDENTIFICATION BY MASS SPECTROMETRY</scope>
</reference>
<reference key="7">
    <citation type="journal article" date="2003" name="Nature">
        <title>Global analysis of protein localization in budding yeast.</title>
        <authorList>
            <person name="Huh W.-K."/>
            <person name="Falvo J.V."/>
            <person name="Gerke L.C."/>
            <person name="Carroll A.S."/>
            <person name="Howson R.W."/>
            <person name="Weissman J.S."/>
            <person name="O'Shea E.K."/>
        </authorList>
    </citation>
    <scope>SUBCELLULAR LOCATION [LARGE SCALE ANALYSIS]</scope>
</reference>
<reference key="8">
    <citation type="journal article" date="2003" name="Nature">
        <title>Global analysis of protein expression in yeast.</title>
        <authorList>
            <person name="Ghaemmaghami S."/>
            <person name="Huh W.-K."/>
            <person name="Bower K."/>
            <person name="Howson R.W."/>
            <person name="Belle A."/>
            <person name="Dephoure N."/>
            <person name="O'Shea E.K."/>
            <person name="Weissman J.S."/>
        </authorList>
    </citation>
    <scope>LEVEL OF PROTEIN EXPRESSION [LARGE SCALE ANALYSIS]</scope>
</reference>
<reference key="9">
    <citation type="journal article" date="2005" name="J. Biol. Chem.">
        <title>Characterization and purification of Saccharomyces cerevisiae RNase MRP reveals a new unique protein component.</title>
        <authorList>
            <person name="Salinas K."/>
            <person name="Wierzbicki S."/>
            <person name="Zhou L."/>
            <person name="Schmitt M.E."/>
        </authorList>
    </citation>
    <scope>IDENTIFICATION IN THE RNASE MRP COMPLEX BY MASS SPECTROMETRY</scope>
</reference>
<comment type="function">
    <text evidence="4 5">Component of ribonuclease P, a protein complex that generates mature tRNA molecules by cleaving their 5'-ends. Also a component of RNase MRP, which cleaves pre-rRNA sequences.</text>
</comment>
<comment type="catalytic activity">
    <reaction>
        <text>Endonucleolytic cleavage of RNA, removing 5'-extranucleotides from tRNA precursor.</text>
        <dbReference type="EC" id="3.1.26.5"/>
    </reaction>
</comment>
<comment type="subunit">
    <text evidence="3 4 5">Component of nuclear RNase P and RNase MRP complexes. RNase P consists of an RNA moiety and at least 9 protein subunits including POP1, POP3, POP4, POP5, POP6, POP7, POP8, RPP1 and RPR2. RNase MRP complex consists of an RNA moiety and at least 10 protein subunits including POP1, POP3, POP4, POP5, POP6, POP7, POP8, RMP1, RPP1 and SNM1, many of which are shared with the RNase P complex.</text>
</comment>
<comment type="interaction">
    <interactant intactId="EBI-15968">
        <id>P38786</id>
    </interactant>
    <interactant intactId="EBI-13621">
        <id>P41812</id>
        <label>POP1</label>
    </interactant>
    <organismsDiffer>false</organismsDiffer>
    <experiments>4</experiments>
</comment>
<comment type="interaction">
    <interactant intactId="EBI-15968">
        <id>P38786</id>
    </interactant>
    <interactant intactId="EBI-13646">
        <id>P38336</id>
        <label>POP4</label>
    </interactant>
    <organismsDiffer>false</organismsDiffer>
    <experiments>4</experiments>
</comment>
<comment type="interaction">
    <interactant intactId="EBI-15968">
        <id>P38786</id>
    </interactant>
    <interactant intactId="EBI-15622">
        <id>P40993</id>
        <label>SNM1</label>
    </interactant>
    <organismsDiffer>false</organismsDiffer>
    <experiments>3</experiments>
</comment>
<comment type="subcellular location">
    <subcellularLocation>
        <location evidence="1">Nucleus</location>
    </subcellularLocation>
</comment>
<comment type="miscellaneous">
    <text evidence="2">Present with 6300 molecules/cell in log phase SD medium.</text>
</comment>
<comment type="similarity">
    <text evidence="6">Belongs to the eukaryotic/archaeal RNase P protein component 3 family.</text>
</comment>
<sequence>MLVDLNVPWPQNSYADKVTSQAVNNLIKTLSTLHMLGYTHIAINFTVNHSEKFPNDVKLLNPIDIKRRFGELMDRTGLKLYSRITLIIDDPSKGQSLSKISQAFDIVAALPISEKGLTLSTTNLDIDLLTFQYGSRLPTFLKHKSICSCVNRGVKLEIVYGYALRDVQARRQFVSNVRSVIRSSRSRGIVIGSGAMSPLECRNILGVTSLIKNLGLPSDRCSKAMGDLASLVLLNGRLRNKSHKQTIVTGGGSGNGDDVVNDVQGIDDVQTIKVVKRSMDAEQLGHASKRHKP</sequence>
<evidence type="ECO:0000269" key="1">
    <source>
    </source>
</evidence>
<evidence type="ECO:0000269" key="2">
    <source>
    </source>
</evidence>
<evidence type="ECO:0000269" key="3">
    <source>
    </source>
</evidence>
<evidence type="ECO:0000269" key="4">
    <source>
    </source>
</evidence>
<evidence type="ECO:0000269" key="5">
    <source>
    </source>
</evidence>
<evidence type="ECO:0000305" key="6"/>
<evidence type="ECO:0007829" key="7">
    <source>
        <dbReference type="PDB" id="6AGB"/>
    </source>
</evidence>
<evidence type="ECO:0007829" key="8">
    <source>
        <dbReference type="PDB" id="6W6V"/>
    </source>
</evidence>
<evidence type="ECO:0007829" key="9">
    <source>
        <dbReference type="PDB" id="7C79"/>
    </source>
</evidence>
<evidence type="ECO:0007829" key="10">
    <source>
        <dbReference type="PDB" id="7C7A"/>
    </source>
</evidence>